<dbReference type="EC" id="2.7.7.23" evidence="1"/>
<dbReference type="EC" id="2.3.1.157" evidence="1"/>
<dbReference type="EMBL" id="CP000958">
    <property type="protein sequence ID" value="ACA92159.1"/>
    <property type="molecule type" value="Genomic_DNA"/>
</dbReference>
<dbReference type="RefSeq" id="WP_012329365.1">
    <property type="nucleotide sequence ID" value="NC_010508.1"/>
</dbReference>
<dbReference type="SMR" id="B1JZU8"/>
<dbReference type="GeneID" id="83049781"/>
<dbReference type="KEGG" id="bcm:Bcenmc03_3001"/>
<dbReference type="HOGENOM" id="CLU_029499_15_2_4"/>
<dbReference type="UniPathway" id="UPA00113">
    <property type="reaction ID" value="UER00532"/>
</dbReference>
<dbReference type="UniPathway" id="UPA00113">
    <property type="reaction ID" value="UER00533"/>
</dbReference>
<dbReference type="UniPathway" id="UPA00973"/>
<dbReference type="Proteomes" id="UP000002169">
    <property type="component" value="Chromosome 1"/>
</dbReference>
<dbReference type="GO" id="GO:0005737">
    <property type="term" value="C:cytoplasm"/>
    <property type="evidence" value="ECO:0007669"/>
    <property type="project" value="UniProtKB-SubCell"/>
</dbReference>
<dbReference type="GO" id="GO:0016020">
    <property type="term" value="C:membrane"/>
    <property type="evidence" value="ECO:0007669"/>
    <property type="project" value="GOC"/>
</dbReference>
<dbReference type="GO" id="GO:0019134">
    <property type="term" value="F:glucosamine-1-phosphate N-acetyltransferase activity"/>
    <property type="evidence" value="ECO:0007669"/>
    <property type="project" value="UniProtKB-UniRule"/>
</dbReference>
<dbReference type="GO" id="GO:0000287">
    <property type="term" value="F:magnesium ion binding"/>
    <property type="evidence" value="ECO:0007669"/>
    <property type="project" value="UniProtKB-UniRule"/>
</dbReference>
<dbReference type="GO" id="GO:0003977">
    <property type="term" value="F:UDP-N-acetylglucosamine diphosphorylase activity"/>
    <property type="evidence" value="ECO:0007669"/>
    <property type="project" value="UniProtKB-UniRule"/>
</dbReference>
<dbReference type="GO" id="GO:0000902">
    <property type="term" value="P:cell morphogenesis"/>
    <property type="evidence" value="ECO:0007669"/>
    <property type="project" value="UniProtKB-UniRule"/>
</dbReference>
<dbReference type="GO" id="GO:0071555">
    <property type="term" value="P:cell wall organization"/>
    <property type="evidence" value="ECO:0007669"/>
    <property type="project" value="UniProtKB-KW"/>
</dbReference>
<dbReference type="GO" id="GO:0009245">
    <property type="term" value="P:lipid A biosynthetic process"/>
    <property type="evidence" value="ECO:0007669"/>
    <property type="project" value="UniProtKB-UniRule"/>
</dbReference>
<dbReference type="GO" id="GO:0009252">
    <property type="term" value="P:peptidoglycan biosynthetic process"/>
    <property type="evidence" value="ECO:0007669"/>
    <property type="project" value="UniProtKB-UniRule"/>
</dbReference>
<dbReference type="GO" id="GO:0008360">
    <property type="term" value="P:regulation of cell shape"/>
    <property type="evidence" value="ECO:0007669"/>
    <property type="project" value="UniProtKB-KW"/>
</dbReference>
<dbReference type="GO" id="GO:0006048">
    <property type="term" value="P:UDP-N-acetylglucosamine biosynthetic process"/>
    <property type="evidence" value="ECO:0007669"/>
    <property type="project" value="UniProtKB-UniPathway"/>
</dbReference>
<dbReference type="CDD" id="cd02540">
    <property type="entry name" value="GT2_GlmU_N_bac"/>
    <property type="match status" value="1"/>
</dbReference>
<dbReference type="CDD" id="cd03353">
    <property type="entry name" value="LbH_GlmU_C"/>
    <property type="match status" value="1"/>
</dbReference>
<dbReference type="Gene3D" id="2.160.10.10">
    <property type="entry name" value="Hexapeptide repeat proteins"/>
    <property type="match status" value="1"/>
</dbReference>
<dbReference type="Gene3D" id="3.90.550.10">
    <property type="entry name" value="Spore Coat Polysaccharide Biosynthesis Protein SpsA, Chain A"/>
    <property type="match status" value="1"/>
</dbReference>
<dbReference type="HAMAP" id="MF_01631">
    <property type="entry name" value="GlmU"/>
    <property type="match status" value="1"/>
</dbReference>
<dbReference type="InterPro" id="IPR005882">
    <property type="entry name" value="Bifunctional_GlmU"/>
</dbReference>
<dbReference type="InterPro" id="IPR050065">
    <property type="entry name" value="GlmU-like"/>
</dbReference>
<dbReference type="InterPro" id="IPR038009">
    <property type="entry name" value="GlmU_C_LbH"/>
</dbReference>
<dbReference type="InterPro" id="IPR001451">
    <property type="entry name" value="Hexapep"/>
</dbReference>
<dbReference type="InterPro" id="IPR018357">
    <property type="entry name" value="Hexapep_transf_CS"/>
</dbReference>
<dbReference type="InterPro" id="IPR025877">
    <property type="entry name" value="MobA-like_NTP_Trfase"/>
</dbReference>
<dbReference type="InterPro" id="IPR029044">
    <property type="entry name" value="Nucleotide-diphossugar_trans"/>
</dbReference>
<dbReference type="InterPro" id="IPR011004">
    <property type="entry name" value="Trimer_LpxA-like_sf"/>
</dbReference>
<dbReference type="NCBIfam" id="TIGR01173">
    <property type="entry name" value="glmU"/>
    <property type="match status" value="1"/>
</dbReference>
<dbReference type="PANTHER" id="PTHR43584:SF3">
    <property type="entry name" value="BIFUNCTIONAL PROTEIN GLMU"/>
    <property type="match status" value="1"/>
</dbReference>
<dbReference type="PANTHER" id="PTHR43584">
    <property type="entry name" value="NUCLEOTIDYL TRANSFERASE"/>
    <property type="match status" value="1"/>
</dbReference>
<dbReference type="Pfam" id="PF00132">
    <property type="entry name" value="Hexapep"/>
    <property type="match status" value="2"/>
</dbReference>
<dbReference type="Pfam" id="PF12804">
    <property type="entry name" value="NTP_transf_3"/>
    <property type="match status" value="1"/>
</dbReference>
<dbReference type="SUPFAM" id="SSF53448">
    <property type="entry name" value="Nucleotide-diphospho-sugar transferases"/>
    <property type="match status" value="1"/>
</dbReference>
<dbReference type="SUPFAM" id="SSF51161">
    <property type="entry name" value="Trimeric LpxA-like enzymes"/>
    <property type="match status" value="1"/>
</dbReference>
<dbReference type="PROSITE" id="PS00101">
    <property type="entry name" value="HEXAPEP_TRANSFERASES"/>
    <property type="match status" value="2"/>
</dbReference>
<sequence>MNIVILAAGTGKRMRSALPKVLHPLAGRPLLSHVIDTARTLQPSRLVVVVGHGAEQVQAAVAAPDVQFAVQAEQLGTGHAVRQALPLLDPAQPTLVLYGDVPLTRASTLQRLVDAARDGRYGILTVTLDDPTGYGRIVRDASGFVTRIVEQKDASPEELKIAEINTGIIVTPTAQLSMWLGALKNENAQGEYYLTDVVELAIEAGFEVVTSQPDEEWETLGVNSKAQLAELERIHQRNVADALLVDGVTLADPARVDVRGTLRCGRDVSIDVNCVFEGNVTLADNVTIGANCVIRNASVGAGTRIDAFTHIDGAELGANTVIGPYARLRPGAQLADEAHVGNFVEVKNAVIGHGSKANHLTYIGDADIGARVNIGAGTITCNYDGANKFRTVIEDDVFVGSDTQLVAPVRVGRGVTIAAGTTIWKDVAEGVLALNEKTQTAKSGYVRPVKKKS</sequence>
<keyword id="KW-0012">Acyltransferase</keyword>
<keyword id="KW-0133">Cell shape</keyword>
<keyword id="KW-0961">Cell wall biogenesis/degradation</keyword>
<keyword id="KW-0963">Cytoplasm</keyword>
<keyword id="KW-0460">Magnesium</keyword>
<keyword id="KW-0479">Metal-binding</keyword>
<keyword id="KW-0511">Multifunctional enzyme</keyword>
<keyword id="KW-0548">Nucleotidyltransferase</keyword>
<keyword id="KW-0573">Peptidoglycan synthesis</keyword>
<keyword id="KW-0677">Repeat</keyword>
<keyword id="KW-0808">Transferase</keyword>
<name>GLMU_BURO0</name>
<organism>
    <name type="scientific">Burkholderia orbicola (strain MC0-3)</name>
    <dbReference type="NCBI Taxonomy" id="406425"/>
    <lineage>
        <taxon>Bacteria</taxon>
        <taxon>Pseudomonadati</taxon>
        <taxon>Pseudomonadota</taxon>
        <taxon>Betaproteobacteria</taxon>
        <taxon>Burkholderiales</taxon>
        <taxon>Burkholderiaceae</taxon>
        <taxon>Burkholderia</taxon>
        <taxon>Burkholderia cepacia complex</taxon>
        <taxon>Burkholderia orbicola</taxon>
    </lineage>
</organism>
<evidence type="ECO:0000255" key="1">
    <source>
        <dbReference type="HAMAP-Rule" id="MF_01631"/>
    </source>
</evidence>
<gene>
    <name evidence="1" type="primary">glmU</name>
    <name type="ordered locus">Bcenmc03_3001</name>
</gene>
<accession>B1JZU8</accession>
<feature type="chain" id="PRO_1000186415" description="Bifunctional protein GlmU">
    <location>
        <begin position="1"/>
        <end position="453"/>
    </location>
</feature>
<feature type="region of interest" description="Pyrophosphorylase" evidence="1">
    <location>
        <begin position="1"/>
        <end position="225"/>
    </location>
</feature>
<feature type="region of interest" description="Linker" evidence="1">
    <location>
        <begin position="226"/>
        <end position="246"/>
    </location>
</feature>
<feature type="region of interest" description="N-acetyltransferase" evidence="1">
    <location>
        <begin position="247"/>
        <end position="453"/>
    </location>
</feature>
<feature type="active site" description="Proton acceptor" evidence="1">
    <location>
        <position position="359"/>
    </location>
</feature>
<feature type="binding site" evidence="1">
    <location>
        <begin position="6"/>
        <end position="9"/>
    </location>
    <ligand>
        <name>UDP-N-acetyl-alpha-D-glucosamine</name>
        <dbReference type="ChEBI" id="CHEBI:57705"/>
    </ligand>
</feature>
<feature type="binding site" evidence="1">
    <location>
        <position position="20"/>
    </location>
    <ligand>
        <name>UDP-N-acetyl-alpha-D-glucosamine</name>
        <dbReference type="ChEBI" id="CHEBI:57705"/>
    </ligand>
</feature>
<feature type="binding site" evidence="1">
    <location>
        <position position="71"/>
    </location>
    <ligand>
        <name>UDP-N-acetyl-alpha-D-glucosamine</name>
        <dbReference type="ChEBI" id="CHEBI:57705"/>
    </ligand>
</feature>
<feature type="binding site" evidence="1">
    <location>
        <begin position="76"/>
        <end position="77"/>
    </location>
    <ligand>
        <name>UDP-N-acetyl-alpha-D-glucosamine</name>
        <dbReference type="ChEBI" id="CHEBI:57705"/>
    </ligand>
</feature>
<feature type="binding site" evidence="1">
    <location>
        <begin position="98"/>
        <end position="100"/>
    </location>
    <ligand>
        <name>UDP-N-acetyl-alpha-D-glucosamine</name>
        <dbReference type="ChEBI" id="CHEBI:57705"/>
    </ligand>
</feature>
<feature type="binding site" evidence="1">
    <location>
        <position position="100"/>
    </location>
    <ligand>
        <name>Mg(2+)</name>
        <dbReference type="ChEBI" id="CHEBI:18420"/>
    </ligand>
</feature>
<feature type="binding site" evidence="1">
    <location>
        <position position="135"/>
    </location>
    <ligand>
        <name>UDP-N-acetyl-alpha-D-glucosamine</name>
        <dbReference type="ChEBI" id="CHEBI:57705"/>
    </ligand>
</feature>
<feature type="binding site" evidence="1">
    <location>
        <position position="150"/>
    </location>
    <ligand>
        <name>UDP-N-acetyl-alpha-D-glucosamine</name>
        <dbReference type="ChEBI" id="CHEBI:57705"/>
    </ligand>
</feature>
<feature type="binding site" evidence="1">
    <location>
        <position position="165"/>
    </location>
    <ligand>
        <name>UDP-N-acetyl-alpha-D-glucosamine</name>
        <dbReference type="ChEBI" id="CHEBI:57705"/>
    </ligand>
</feature>
<feature type="binding site" evidence="1">
    <location>
        <position position="223"/>
    </location>
    <ligand>
        <name>Mg(2+)</name>
        <dbReference type="ChEBI" id="CHEBI:18420"/>
    </ligand>
</feature>
<feature type="binding site" evidence="1">
    <location>
        <position position="223"/>
    </location>
    <ligand>
        <name>UDP-N-acetyl-alpha-D-glucosamine</name>
        <dbReference type="ChEBI" id="CHEBI:57705"/>
    </ligand>
</feature>
<feature type="binding site" evidence="1">
    <location>
        <position position="329"/>
    </location>
    <ligand>
        <name>UDP-N-acetyl-alpha-D-glucosamine</name>
        <dbReference type="ChEBI" id="CHEBI:57705"/>
    </ligand>
</feature>
<feature type="binding site" evidence="1">
    <location>
        <position position="347"/>
    </location>
    <ligand>
        <name>UDP-N-acetyl-alpha-D-glucosamine</name>
        <dbReference type="ChEBI" id="CHEBI:57705"/>
    </ligand>
</feature>
<feature type="binding site" evidence="1">
    <location>
        <position position="362"/>
    </location>
    <ligand>
        <name>UDP-N-acetyl-alpha-D-glucosamine</name>
        <dbReference type="ChEBI" id="CHEBI:57705"/>
    </ligand>
</feature>
<feature type="binding site" evidence="1">
    <location>
        <position position="373"/>
    </location>
    <ligand>
        <name>UDP-N-acetyl-alpha-D-glucosamine</name>
        <dbReference type="ChEBI" id="CHEBI:57705"/>
    </ligand>
</feature>
<feature type="binding site" evidence="1">
    <location>
        <position position="376"/>
    </location>
    <ligand>
        <name>acetyl-CoA</name>
        <dbReference type="ChEBI" id="CHEBI:57288"/>
    </ligand>
</feature>
<feature type="binding site" evidence="1">
    <location>
        <begin position="382"/>
        <end position="383"/>
    </location>
    <ligand>
        <name>acetyl-CoA</name>
        <dbReference type="ChEBI" id="CHEBI:57288"/>
    </ligand>
</feature>
<feature type="binding site" evidence="1">
    <location>
        <position position="401"/>
    </location>
    <ligand>
        <name>acetyl-CoA</name>
        <dbReference type="ChEBI" id="CHEBI:57288"/>
    </ligand>
</feature>
<feature type="binding site" evidence="1">
    <location>
        <position position="419"/>
    </location>
    <ligand>
        <name>acetyl-CoA</name>
        <dbReference type="ChEBI" id="CHEBI:57288"/>
    </ligand>
</feature>
<comment type="function">
    <text evidence="1">Catalyzes the last two sequential reactions in the de novo biosynthetic pathway for UDP-N-acetylglucosamine (UDP-GlcNAc). The C-terminal domain catalyzes the transfer of acetyl group from acetyl coenzyme A to glucosamine-1-phosphate (GlcN-1-P) to produce N-acetylglucosamine-1-phosphate (GlcNAc-1-P), which is converted into UDP-GlcNAc by the transfer of uridine 5-monophosphate (from uridine 5-triphosphate), a reaction catalyzed by the N-terminal domain.</text>
</comment>
<comment type="catalytic activity">
    <reaction evidence="1">
        <text>alpha-D-glucosamine 1-phosphate + acetyl-CoA = N-acetyl-alpha-D-glucosamine 1-phosphate + CoA + H(+)</text>
        <dbReference type="Rhea" id="RHEA:13725"/>
        <dbReference type="ChEBI" id="CHEBI:15378"/>
        <dbReference type="ChEBI" id="CHEBI:57287"/>
        <dbReference type="ChEBI" id="CHEBI:57288"/>
        <dbReference type="ChEBI" id="CHEBI:57776"/>
        <dbReference type="ChEBI" id="CHEBI:58516"/>
        <dbReference type="EC" id="2.3.1.157"/>
    </reaction>
</comment>
<comment type="catalytic activity">
    <reaction evidence="1">
        <text>N-acetyl-alpha-D-glucosamine 1-phosphate + UTP + H(+) = UDP-N-acetyl-alpha-D-glucosamine + diphosphate</text>
        <dbReference type="Rhea" id="RHEA:13509"/>
        <dbReference type="ChEBI" id="CHEBI:15378"/>
        <dbReference type="ChEBI" id="CHEBI:33019"/>
        <dbReference type="ChEBI" id="CHEBI:46398"/>
        <dbReference type="ChEBI" id="CHEBI:57705"/>
        <dbReference type="ChEBI" id="CHEBI:57776"/>
        <dbReference type="EC" id="2.7.7.23"/>
    </reaction>
</comment>
<comment type="cofactor">
    <cofactor evidence="1">
        <name>Mg(2+)</name>
        <dbReference type="ChEBI" id="CHEBI:18420"/>
    </cofactor>
    <text evidence="1">Binds 1 Mg(2+) ion per subunit.</text>
</comment>
<comment type="pathway">
    <text evidence="1">Nucleotide-sugar biosynthesis; UDP-N-acetyl-alpha-D-glucosamine biosynthesis; N-acetyl-alpha-D-glucosamine 1-phosphate from alpha-D-glucosamine 6-phosphate (route II): step 2/2.</text>
</comment>
<comment type="pathway">
    <text evidence="1">Nucleotide-sugar biosynthesis; UDP-N-acetyl-alpha-D-glucosamine biosynthesis; UDP-N-acetyl-alpha-D-glucosamine from N-acetyl-alpha-D-glucosamine 1-phosphate: step 1/1.</text>
</comment>
<comment type="pathway">
    <text evidence="1">Bacterial outer membrane biogenesis; LPS lipid A biosynthesis.</text>
</comment>
<comment type="subunit">
    <text evidence="1">Homotrimer.</text>
</comment>
<comment type="subcellular location">
    <subcellularLocation>
        <location evidence="1">Cytoplasm</location>
    </subcellularLocation>
</comment>
<comment type="similarity">
    <text evidence="1">In the N-terminal section; belongs to the N-acetylglucosamine-1-phosphate uridyltransferase family.</text>
</comment>
<comment type="similarity">
    <text evidence="1">In the C-terminal section; belongs to the transferase hexapeptide repeat family.</text>
</comment>
<proteinExistence type="inferred from homology"/>
<reference key="1">
    <citation type="submission" date="2008-02" db="EMBL/GenBank/DDBJ databases">
        <title>Complete sequence of chromosome 1 of Burkholderia cenocepacia MC0-3.</title>
        <authorList>
            <person name="Copeland A."/>
            <person name="Lucas S."/>
            <person name="Lapidus A."/>
            <person name="Barry K."/>
            <person name="Bruce D."/>
            <person name="Goodwin L."/>
            <person name="Glavina del Rio T."/>
            <person name="Dalin E."/>
            <person name="Tice H."/>
            <person name="Pitluck S."/>
            <person name="Chain P."/>
            <person name="Malfatti S."/>
            <person name="Shin M."/>
            <person name="Vergez L."/>
            <person name="Schmutz J."/>
            <person name="Larimer F."/>
            <person name="Land M."/>
            <person name="Hauser L."/>
            <person name="Kyrpides N."/>
            <person name="Mikhailova N."/>
            <person name="Tiedje J."/>
            <person name="Richardson P."/>
        </authorList>
    </citation>
    <scope>NUCLEOTIDE SEQUENCE [LARGE SCALE GENOMIC DNA]</scope>
    <source>
        <strain>MC0-3</strain>
    </source>
</reference>
<protein>
    <recommendedName>
        <fullName evidence="1">Bifunctional protein GlmU</fullName>
    </recommendedName>
    <domain>
        <recommendedName>
            <fullName evidence="1">UDP-N-acetylglucosamine pyrophosphorylase</fullName>
            <ecNumber evidence="1">2.7.7.23</ecNumber>
        </recommendedName>
        <alternativeName>
            <fullName evidence="1">N-acetylglucosamine-1-phosphate uridyltransferase</fullName>
        </alternativeName>
    </domain>
    <domain>
        <recommendedName>
            <fullName evidence="1">Glucosamine-1-phosphate N-acetyltransferase</fullName>
            <ecNumber evidence="1">2.3.1.157</ecNumber>
        </recommendedName>
    </domain>
</protein>